<comment type="function">
    <text evidence="1">Bifunctional enzyme that catalyzes the oxidative decarboxylation of UDP-glucuronic acid (UDP-GlcUA) to UDP-4-keto-arabinose (UDP-Ara4O) and the addition of a formyl group to UDP-4-amino-4-deoxy-L-arabinose (UDP-L-Ara4N) to form UDP-L-4-formamido-arabinose (UDP-L-Ara4FN). The modified arabinose is attached to lipid A and is required for resistance to polymyxin and cationic antimicrobial peptides.</text>
</comment>
<comment type="catalytic activity">
    <reaction evidence="1">
        <text>UDP-alpha-D-glucuronate + NAD(+) = UDP-beta-L-threo-pentopyranos-4-ulose + CO2 + NADH</text>
        <dbReference type="Rhea" id="RHEA:24702"/>
        <dbReference type="ChEBI" id="CHEBI:16526"/>
        <dbReference type="ChEBI" id="CHEBI:57540"/>
        <dbReference type="ChEBI" id="CHEBI:57945"/>
        <dbReference type="ChEBI" id="CHEBI:58052"/>
        <dbReference type="ChEBI" id="CHEBI:58710"/>
        <dbReference type="EC" id="1.1.1.305"/>
    </reaction>
</comment>
<comment type="catalytic activity">
    <reaction evidence="1">
        <text>UDP-4-amino-4-deoxy-beta-L-arabinose + (6R)-10-formyltetrahydrofolate = UDP-4-deoxy-4-formamido-beta-L-arabinose + (6S)-5,6,7,8-tetrahydrofolate + H(+)</text>
        <dbReference type="Rhea" id="RHEA:24706"/>
        <dbReference type="ChEBI" id="CHEBI:15378"/>
        <dbReference type="ChEBI" id="CHEBI:57453"/>
        <dbReference type="ChEBI" id="CHEBI:58708"/>
        <dbReference type="ChEBI" id="CHEBI:58709"/>
        <dbReference type="ChEBI" id="CHEBI:195366"/>
        <dbReference type="EC" id="2.1.2.13"/>
    </reaction>
</comment>
<comment type="pathway">
    <text evidence="1">Nucleotide-sugar biosynthesis; UDP-4-deoxy-4-formamido-beta-L-arabinose biosynthesis; UDP-4-deoxy-4-formamido-beta-L-arabinose from UDP-alpha-D-glucuronate: step 1/3.</text>
</comment>
<comment type="pathway">
    <text evidence="1">Nucleotide-sugar biosynthesis; UDP-4-deoxy-4-formamido-beta-L-arabinose biosynthesis; UDP-4-deoxy-4-formamido-beta-L-arabinose from UDP-alpha-D-glucuronate: step 3/3.</text>
</comment>
<comment type="pathway">
    <text evidence="1">Bacterial outer membrane biogenesis; lipopolysaccharide biosynthesis.</text>
</comment>
<comment type="subunit">
    <text evidence="1">Homohexamer, formed by a dimer of trimers.</text>
</comment>
<comment type="similarity">
    <text evidence="1">In the N-terminal section; belongs to the Fmt family. UDP-L-Ara4N formyltransferase subfamily.</text>
</comment>
<comment type="similarity">
    <text evidence="1">In the C-terminal section; belongs to the NAD(P)-dependent epimerase/dehydratase family. UDP-glucuronic acid decarboxylase subfamily.</text>
</comment>
<gene>
    <name evidence="1" type="primary">arnA</name>
    <name type="ordered locus">SPA0564</name>
</gene>
<dbReference type="EC" id="2.1.2.13" evidence="1"/>
<dbReference type="EC" id="1.1.1.305" evidence="1"/>
<dbReference type="EMBL" id="CP000026">
    <property type="protein sequence ID" value="AAV76566.1"/>
    <property type="molecule type" value="Genomic_DNA"/>
</dbReference>
<dbReference type="RefSeq" id="WP_000648774.1">
    <property type="nucleotide sequence ID" value="NC_006511.1"/>
</dbReference>
<dbReference type="SMR" id="Q5PNA6"/>
<dbReference type="KEGG" id="spt:SPA0564"/>
<dbReference type="HOGENOM" id="CLU_007383_23_2_6"/>
<dbReference type="UniPathway" id="UPA00030"/>
<dbReference type="UniPathway" id="UPA00032">
    <property type="reaction ID" value="UER00492"/>
</dbReference>
<dbReference type="UniPathway" id="UPA00032">
    <property type="reaction ID" value="UER00494"/>
</dbReference>
<dbReference type="Proteomes" id="UP000008185">
    <property type="component" value="Chromosome"/>
</dbReference>
<dbReference type="GO" id="GO:0016020">
    <property type="term" value="C:membrane"/>
    <property type="evidence" value="ECO:0007669"/>
    <property type="project" value="GOC"/>
</dbReference>
<dbReference type="GO" id="GO:0016831">
    <property type="term" value="F:carboxy-lyase activity"/>
    <property type="evidence" value="ECO:0007669"/>
    <property type="project" value="InterPro"/>
</dbReference>
<dbReference type="GO" id="GO:0099619">
    <property type="term" value="F:UDP-4-amino-4-deoxy-L-arabinose formyltransferase activity"/>
    <property type="evidence" value="ECO:0007669"/>
    <property type="project" value="UniProtKB-EC"/>
</dbReference>
<dbReference type="GO" id="GO:0099618">
    <property type="term" value="F:UDP-glucuronate dehydrogenase activity"/>
    <property type="evidence" value="ECO:0007669"/>
    <property type="project" value="UniProtKB-EC"/>
</dbReference>
<dbReference type="GO" id="GO:0009245">
    <property type="term" value="P:lipid A biosynthetic process"/>
    <property type="evidence" value="ECO:0007669"/>
    <property type="project" value="UniProtKB-KW"/>
</dbReference>
<dbReference type="GO" id="GO:0009103">
    <property type="term" value="P:lipopolysaccharide biosynthetic process"/>
    <property type="evidence" value="ECO:0007669"/>
    <property type="project" value="UniProtKB-UniRule"/>
</dbReference>
<dbReference type="GO" id="GO:0046677">
    <property type="term" value="P:response to antibiotic"/>
    <property type="evidence" value="ECO:0007669"/>
    <property type="project" value="UniProtKB-KW"/>
</dbReference>
<dbReference type="CDD" id="cd08702">
    <property type="entry name" value="Arna_FMT_C"/>
    <property type="match status" value="1"/>
</dbReference>
<dbReference type="CDD" id="cd05257">
    <property type="entry name" value="Arna_like_SDR_e"/>
    <property type="match status" value="1"/>
</dbReference>
<dbReference type="FunFam" id="3.40.50.720:FF:000197">
    <property type="entry name" value="Bifunctional polymyxin resistance protein ArnA"/>
    <property type="match status" value="1"/>
</dbReference>
<dbReference type="Gene3D" id="3.40.50.12230">
    <property type="match status" value="1"/>
</dbReference>
<dbReference type="Gene3D" id="3.40.50.720">
    <property type="entry name" value="NAD(P)-binding Rossmann-like Domain"/>
    <property type="match status" value="1"/>
</dbReference>
<dbReference type="HAMAP" id="MF_01166">
    <property type="entry name" value="ArnA"/>
    <property type="match status" value="1"/>
</dbReference>
<dbReference type="InterPro" id="IPR045869">
    <property type="entry name" value="Arna-like_SDR_e"/>
</dbReference>
<dbReference type="InterPro" id="IPR021168">
    <property type="entry name" value="Bifun_polymyxin_resist_ArnA"/>
</dbReference>
<dbReference type="InterPro" id="IPR001509">
    <property type="entry name" value="Epimerase_deHydtase"/>
</dbReference>
<dbReference type="InterPro" id="IPR005793">
    <property type="entry name" value="Formyl_trans_C"/>
</dbReference>
<dbReference type="InterPro" id="IPR002376">
    <property type="entry name" value="Formyl_transf_N"/>
</dbReference>
<dbReference type="InterPro" id="IPR036477">
    <property type="entry name" value="Formyl_transf_N_sf"/>
</dbReference>
<dbReference type="InterPro" id="IPR011034">
    <property type="entry name" value="Formyl_transferase-like_C_sf"/>
</dbReference>
<dbReference type="InterPro" id="IPR050177">
    <property type="entry name" value="Lipid_A_modif_metabolic_enz"/>
</dbReference>
<dbReference type="InterPro" id="IPR036291">
    <property type="entry name" value="NAD(P)-bd_dom_sf"/>
</dbReference>
<dbReference type="NCBIfam" id="NF005414">
    <property type="entry name" value="PRK06988.1"/>
    <property type="match status" value="1"/>
</dbReference>
<dbReference type="NCBIfam" id="NF005998">
    <property type="entry name" value="PRK08125.1"/>
    <property type="match status" value="1"/>
</dbReference>
<dbReference type="NCBIfam" id="NF008872">
    <property type="entry name" value="PRK11908.1"/>
    <property type="match status" value="1"/>
</dbReference>
<dbReference type="PANTHER" id="PTHR43245">
    <property type="entry name" value="BIFUNCTIONAL POLYMYXIN RESISTANCE PROTEIN ARNA"/>
    <property type="match status" value="1"/>
</dbReference>
<dbReference type="PANTHER" id="PTHR43245:SF13">
    <property type="entry name" value="UDP-D-APIOSE_UDP-D-XYLOSE SYNTHASE 2"/>
    <property type="match status" value="1"/>
</dbReference>
<dbReference type="Pfam" id="PF01370">
    <property type="entry name" value="Epimerase"/>
    <property type="match status" value="1"/>
</dbReference>
<dbReference type="Pfam" id="PF02911">
    <property type="entry name" value="Formyl_trans_C"/>
    <property type="match status" value="1"/>
</dbReference>
<dbReference type="Pfam" id="PF00551">
    <property type="entry name" value="Formyl_trans_N"/>
    <property type="match status" value="1"/>
</dbReference>
<dbReference type="PIRSF" id="PIRSF036506">
    <property type="entry name" value="Bifun_polymyxin_resist_ArnA"/>
    <property type="match status" value="1"/>
</dbReference>
<dbReference type="SUPFAM" id="SSF50486">
    <property type="entry name" value="FMT C-terminal domain-like"/>
    <property type="match status" value="1"/>
</dbReference>
<dbReference type="SUPFAM" id="SSF53328">
    <property type="entry name" value="Formyltransferase"/>
    <property type="match status" value="1"/>
</dbReference>
<dbReference type="SUPFAM" id="SSF51735">
    <property type="entry name" value="NAD(P)-binding Rossmann-fold domains"/>
    <property type="match status" value="1"/>
</dbReference>
<accession>Q5PNA6</accession>
<feature type="chain" id="PRO_0000083107" description="Bifunctional polymyxin resistance protein ArnA">
    <location>
        <begin position="1"/>
        <end position="660"/>
    </location>
</feature>
<feature type="region of interest" description="Formyltransferase ArnAFT">
    <location>
        <begin position="1"/>
        <end position="304"/>
    </location>
</feature>
<feature type="region of interest" description="Dehydrogenase ArnADH">
    <location>
        <begin position="314"/>
        <end position="660"/>
    </location>
</feature>
<feature type="active site" description="Proton donor; for formyltransferase activity" evidence="1">
    <location>
        <position position="104"/>
    </location>
</feature>
<feature type="active site" description="Proton acceptor; for decarboxylase activity" evidence="1">
    <location>
        <position position="434"/>
    </location>
</feature>
<feature type="active site" description="Proton donor; for decarboxylase activity" evidence="1">
    <location>
        <position position="619"/>
    </location>
</feature>
<feature type="binding site" evidence="1">
    <location>
        <position position="114"/>
    </location>
    <ligand>
        <name>(6R)-10-formyltetrahydrofolate</name>
        <dbReference type="ChEBI" id="CHEBI:195366"/>
    </ligand>
</feature>
<feature type="binding site" evidence="1">
    <location>
        <begin position="136"/>
        <end position="140"/>
    </location>
    <ligand>
        <name>(6R)-10-formyltetrahydrofolate</name>
        <dbReference type="ChEBI" id="CHEBI:195366"/>
    </ligand>
</feature>
<feature type="binding site" evidence="1">
    <location>
        <position position="347"/>
    </location>
    <ligand>
        <name>NAD(+)</name>
        <dbReference type="ChEBI" id="CHEBI:57540"/>
    </ligand>
</feature>
<feature type="binding site" evidence="1">
    <location>
        <begin position="368"/>
        <end position="369"/>
    </location>
    <ligand>
        <name>NAD(+)</name>
        <dbReference type="ChEBI" id="CHEBI:57540"/>
    </ligand>
</feature>
<feature type="binding site" evidence="1">
    <location>
        <position position="393"/>
    </location>
    <ligand>
        <name>UDP-alpha-D-glucuronate</name>
        <dbReference type="ChEBI" id="CHEBI:58052"/>
    </ligand>
</feature>
<feature type="binding site" evidence="1">
    <location>
        <position position="398"/>
    </location>
    <ligand>
        <name>UDP-alpha-D-glucuronate</name>
        <dbReference type="ChEBI" id="CHEBI:58052"/>
    </ligand>
</feature>
<feature type="binding site" evidence="1">
    <location>
        <begin position="432"/>
        <end position="433"/>
    </location>
    <ligand>
        <name>UDP-alpha-D-glucuronate</name>
        <dbReference type="ChEBI" id="CHEBI:58052"/>
    </ligand>
</feature>
<feature type="binding site" evidence="1">
    <location>
        <position position="460"/>
    </location>
    <ligand>
        <name>UDP-alpha-D-glucuronate</name>
        <dbReference type="ChEBI" id="CHEBI:58052"/>
    </ligand>
</feature>
<feature type="binding site" evidence="1">
    <location>
        <position position="492"/>
    </location>
    <ligand>
        <name>UDP-alpha-D-glucuronate</name>
        <dbReference type="ChEBI" id="CHEBI:58052"/>
    </ligand>
</feature>
<feature type="binding site" evidence="1">
    <location>
        <begin position="526"/>
        <end position="535"/>
    </location>
    <ligand>
        <name>UDP-alpha-D-glucuronate</name>
        <dbReference type="ChEBI" id="CHEBI:58052"/>
    </ligand>
</feature>
<feature type="binding site" evidence="1">
    <location>
        <position position="613"/>
    </location>
    <ligand>
        <name>UDP-alpha-D-glucuronate</name>
        <dbReference type="ChEBI" id="CHEBI:58052"/>
    </ligand>
</feature>
<feature type="site" description="Transition state stabilizer" evidence="1">
    <location>
        <position position="102"/>
    </location>
</feature>
<feature type="site" description="Raises pKa of active site His" evidence="1">
    <location>
        <position position="140"/>
    </location>
</feature>
<sequence>MKAVIFAYHDMGCQGVQAVLDAGYEIAAIFTHADNPAENTFFGSVSRLAAGLGIPVYAPDNVNHPIWVDRIAELAPDIIFSFYYRNLLSEEILHLAPAGAFNLHGSLLPAYRGRAPLNWVLVNGESETGVTLHRMVKRADAGEIVASQRVAIAQDDVALTLHHKLCQAARQLLNSILPTMKCGNIPSVPQRESDATYYGRRRPEDGLIDWHKPVSTVHNLVRAVAAPWPGAFSYNGSQKFTIWSSRICPDAQGALPGSVISVSPLRVACADGALEIITGQAGDGITVQGSQLAQTLGLVAGACLNRPPATSGKRRIRVLILGVNGFIGNHLTERLLDEENYEVYGMDIGSNAISRFLLHPRFHFVEGDISIHSEWIEYHVKKCDVVLPLVAIATPIEYTRNPLRVFELDFEENLRIIRYCVKYRKRVVFPSTSEVYGMCTDASFDEDKSNLIVGPVNKPRWIYSVSKQLLDRVIWAYGEKEGLRFTLFRPFNWMGPRLDSLNAARIGSSRAITQLILNLVEGTPIKLIDGGQQKRCFTDIRDGIEALFRIIVNEGDRCDGKIINIGNPDNEASIQELATLLLDSFDKHPLRCHFPPFAGFQVVESRSYYGKGYQDVAHRKPSIDNARRCLDWEPSIAMRDTVEETLDFFLRSVDIAERAS</sequence>
<proteinExistence type="inferred from homology"/>
<keyword id="KW-0046">Antibiotic resistance</keyword>
<keyword id="KW-0441">Lipid A biosynthesis</keyword>
<keyword id="KW-0444">Lipid biosynthesis</keyword>
<keyword id="KW-0443">Lipid metabolism</keyword>
<keyword id="KW-0448">Lipopolysaccharide biosynthesis</keyword>
<keyword id="KW-0511">Multifunctional enzyme</keyword>
<keyword id="KW-0520">NAD</keyword>
<keyword id="KW-0560">Oxidoreductase</keyword>
<keyword id="KW-0808">Transferase</keyword>
<evidence type="ECO:0000255" key="1">
    <source>
        <dbReference type="HAMAP-Rule" id="MF_01166"/>
    </source>
</evidence>
<organism>
    <name type="scientific">Salmonella paratyphi A (strain ATCC 9150 / SARB42)</name>
    <dbReference type="NCBI Taxonomy" id="295319"/>
    <lineage>
        <taxon>Bacteria</taxon>
        <taxon>Pseudomonadati</taxon>
        <taxon>Pseudomonadota</taxon>
        <taxon>Gammaproteobacteria</taxon>
        <taxon>Enterobacterales</taxon>
        <taxon>Enterobacteriaceae</taxon>
        <taxon>Salmonella</taxon>
    </lineage>
</organism>
<name>ARNA_SALPA</name>
<protein>
    <recommendedName>
        <fullName evidence="1">Bifunctional polymyxin resistance protein ArnA</fullName>
    </recommendedName>
    <domain>
        <recommendedName>
            <fullName evidence="1">UDP-4-amino-4-deoxy-L-arabinose formyltransferase</fullName>
            <ecNumber evidence="1">2.1.2.13</ecNumber>
        </recommendedName>
        <alternativeName>
            <fullName evidence="1">ArnAFT</fullName>
        </alternativeName>
        <alternativeName>
            <fullName evidence="1">UDP-L-Ara4N formyltransferase</fullName>
        </alternativeName>
    </domain>
    <domain>
        <recommendedName>
            <fullName evidence="1">UDP-glucuronic acid oxidase, UDP-4-keto-hexauronic acid decarboxylating</fullName>
            <ecNumber evidence="1">1.1.1.305</ecNumber>
        </recommendedName>
        <alternativeName>
            <fullName evidence="1">ArnADH</fullName>
        </alternativeName>
        <alternativeName>
            <fullName evidence="1">UDP-GlcUA decarboxylase</fullName>
        </alternativeName>
        <alternativeName>
            <fullName evidence="1">UDP-glucuronic acid dehydrogenase</fullName>
        </alternativeName>
    </domain>
</protein>
<reference key="1">
    <citation type="journal article" date="2004" name="Nat. Genet.">
        <title>Comparison of genome degradation in Paratyphi A and Typhi, human-restricted serovars of Salmonella enterica that cause typhoid.</title>
        <authorList>
            <person name="McClelland M."/>
            <person name="Sanderson K.E."/>
            <person name="Clifton S.W."/>
            <person name="Latreille P."/>
            <person name="Porwollik S."/>
            <person name="Sabo A."/>
            <person name="Meyer R."/>
            <person name="Bieri T."/>
            <person name="Ozersky P."/>
            <person name="McLellan M."/>
            <person name="Harkins C.R."/>
            <person name="Wang C."/>
            <person name="Nguyen C."/>
            <person name="Berghoff A."/>
            <person name="Elliott G."/>
            <person name="Kohlberg S."/>
            <person name="Strong C."/>
            <person name="Du F."/>
            <person name="Carter J."/>
            <person name="Kremizki C."/>
            <person name="Layman D."/>
            <person name="Leonard S."/>
            <person name="Sun H."/>
            <person name="Fulton L."/>
            <person name="Nash W."/>
            <person name="Miner T."/>
            <person name="Minx P."/>
            <person name="Delehaunty K."/>
            <person name="Fronick C."/>
            <person name="Magrini V."/>
            <person name="Nhan M."/>
            <person name="Warren W."/>
            <person name="Florea L."/>
            <person name="Spieth J."/>
            <person name="Wilson R.K."/>
        </authorList>
    </citation>
    <scope>NUCLEOTIDE SEQUENCE [LARGE SCALE GENOMIC DNA]</scope>
    <source>
        <strain>ATCC 9150 / SARB42</strain>
    </source>
</reference>